<comment type="function">
    <text>Oxygen-regulated protein required for bacterial internalization.</text>
</comment>
<comment type="caution">
    <text evidence="2">Was originally thought to be a longer protein that encodes what is now known to be OrgA and OrgB.</text>
</comment>
<comment type="sequence caution" evidence="1">
    <conflict type="frameshift">
        <sequence resource="EMBL-CDS" id="AAA72055"/>
    </conflict>
</comment>
<proteinExistence type="evidence at protein level"/>
<organism>
    <name type="scientific">Salmonella typhimurium (strain SL1344)</name>
    <dbReference type="NCBI Taxonomy" id="216597"/>
    <lineage>
        <taxon>Bacteria</taxon>
        <taxon>Pseudomonadati</taxon>
        <taxon>Pseudomonadota</taxon>
        <taxon>Gammaproteobacteria</taxon>
        <taxon>Enterobacterales</taxon>
        <taxon>Enterobacteriaceae</taxon>
        <taxon>Salmonella</taxon>
    </lineage>
</organism>
<name>ORGA_SALTS</name>
<keyword id="KW-0843">Virulence</keyword>
<protein>
    <recommendedName>
        <fullName>Oxygen-regulated invasion protein OrgA</fullName>
    </recommendedName>
</protein>
<evidence type="ECO:0000305" key="1"/>
<evidence type="ECO:0000305" key="2">
    <source>
    </source>
</evidence>
<reference key="1">
    <citation type="journal article" date="1994" name="Infect. Immun.">
        <title>Identification and characterization of a Salmonella typhimurium oxygen-regulated gene required for bacterial internalization.</title>
        <authorList>
            <person name="Jones B.D."/>
            <person name="Falkow S."/>
        </authorList>
    </citation>
    <scope>NUCLEOTIDE SEQUENCE [GENOMIC DNA]</scope>
    <source>
        <strain>SL1344</strain>
    </source>
</reference>
<reference key="2">
    <citation type="journal article" date="2000" name="Infect. Immun.">
        <title>Transcriptional organization and function of invasion genes within Salmonella enterica serovar Typhimurium pathogenicity island 1, including the prgH, prgI, prgJ, prgK, orgA, orgB, and orgC genes.</title>
        <authorList>
            <person name="Klein J.R."/>
            <person name="Fahlen T.F."/>
            <person name="Jones B.D."/>
        </authorList>
    </citation>
    <scope>SEQUENCE REVISION</scope>
    <scope>CHARACTERIZATION</scope>
    <source>
        <strain>SL1344</strain>
    </source>
</reference>
<reference key="3">
    <citation type="journal article" date="2012" name="Proc. Natl. Acad. Sci. U.S.A.">
        <title>The transcriptional landscape and small RNAs of Salmonella enterica serovar Typhimurium.</title>
        <authorList>
            <person name="Kroger C."/>
            <person name="Dillon S.C."/>
            <person name="Cameron A.D."/>
            <person name="Papenfort K."/>
            <person name="Sivasankaran S.K."/>
            <person name="Hokamp K."/>
            <person name="Chao Y."/>
            <person name="Sittka A."/>
            <person name="Hebrard M."/>
            <person name="Handler K."/>
            <person name="Colgan A."/>
            <person name="Leekitcharoenphon P."/>
            <person name="Langridge G.C."/>
            <person name="Lohan A.J."/>
            <person name="Loftus B."/>
            <person name="Lucchini S."/>
            <person name="Ussery D.W."/>
            <person name="Dorman C.J."/>
            <person name="Thomson N.R."/>
            <person name="Vogel J."/>
            <person name="Hinton J.C."/>
        </authorList>
    </citation>
    <scope>NUCLEOTIDE SEQUENCE [LARGE SCALE GENOMIC DNA]</scope>
    <source>
        <strain>SL1344</strain>
    </source>
</reference>
<feature type="chain" id="PRO_0000406079" description="Oxygen-regulated invasion protein OrgA">
    <location>
        <begin position="1"/>
        <end position="199"/>
    </location>
</feature>
<feature type="sequence conflict" description="In Ref. 1; AAA72055." evidence="1" ref="1">
    <original>Q</original>
    <variation>R</variation>
    <location>
        <position position="18"/>
    </location>
</feature>
<feature type="sequence conflict" description="In Ref. 1; AAA72055." evidence="1" ref="1">
    <original>F</original>
    <variation>V</variation>
    <location>
        <position position="22"/>
    </location>
</feature>
<dbReference type="EMBL" id="L33855">
    <property type="protein sequence ID" value="AAA72055.1"/>
    <property type="status" value="ALT_FRAME"/>
    <property type="molecule type" value="Genomic_DNA"/>
</dbReference>
<dbReference type="EMBL" id="FQ312003">
    <property type="protein sequence ID" value="CBW18948.1"/>
    <property type="molecule type" value="Genomic_DNA"/>
</dbReference>
<dbReference type="RefSeq" id="WP_001574876.1">
    <property type="nucleotide sequence ID" value="NZ_QASL01000017.1"/>
</dbReference>
<dbReference type="KEGG" id="sey:SL1344_2850"/>
<dbReference type="PATRIC" id="fig|216597.6.peg.3171"/>
<dbReference type="HOGENOM" id="CLU_092002_0_0_6"/>
<dbReference type="BioCyc" id="SENT216597:SL1344_RS14860-MONOMER"/>
<dbReference type="Proteomes" id="UP000008962">
    <property type="component" value="Chromosome"/>
</dbReference>
<dbReference type="InterPro" id="IPR013388">
    <property type="entry name" value="T3SS_OrgA/MxiK"/>
</dbReference>
<dbReference type="NCBIfam" id="TIGR02555">
    <property type="entry name" value="OrgA_MxiK"/>
    <property type="match status" value="1"/>
</dbReference>
<dbReference type="NCBIfam" id="NF011851">
    <property type="entry name" value="PRK15323.1"/>
    <property type="match status" value="1"/>
</dbReference>
<dbReference type="Pfam" id="PF09482">
    <property type="entry name" value="OrgA_MxiK"/>
    <property type="match status" value="1"/>
</dbReference>
<sequence length="199" mass="22832">MIRRNRQMNRQPLPIIWQRIIFDPLSYIHPQRLQIAPEMIVRPAARAAANELILAAWRLKNGEKECIQNSLTQLWLRQWRRLPQVAYLLGCHKLRADLARQGALLGLPDWAQAFLAMHQGTSLSVCNKAPNHRFLLSVGYAQLNALNEFLPESLAQRFPLLFPPFIEEALKQDAVEMSILLLALQYAQKYPNTVPAFAC</sequence>
<gene>
    <name type="primary">orgA</name>
    <name type="ordered locus">SL1344_2850</name>
</gene>
<accession>E1WAB5</accession>
<accession>P40823</accession>
<accession>P58653</accession>